<comment type="function">
    <text evidence="1">Cytochrome c oxidase subunit which plays a role in assembly of respiratory supercomplexes.</text>
</comment>
<comment type="subunit">
    <text evidence="1">Associates with the respiratory chain complex III/complex IV supercomplex.</text>
</comment>
<comment type="subcellular location">
    <subcellularLocation>
        <location evidence="3">Mitochondrion membrane</location>
        <topology evidence="3">Multi-pass membrane protein</topology>
    </subcellularLocation>
</comment>
<comment type="similarity">
    <text evidence="5">Belongs to the RCF1 family.</text>
</comment>
<keyword id="KW-0175">Coiled coil</keyword>
<keyword id="KW-0472">Membrane</keyword>
<keyword id="KW-0496">Mitochondrion</keyword>
<keyword id="KW-1185">Reference proteome</keyword>
<keyword id="KW-0812">Transmembrane</keyword>
<keyword id="KW-1133">Transmembrane helix</keyword>
<sequence>MASNTIAQSPSGAIHVPIDQGYEGWTEKFSRKFKENPWVPIGCVATCGALIMSAVKMRAGKSTDMNYWLRARVVIQGVTIAALVAGSMSLQAQRKKVEEATGVTEETKKEREKEEFESRLRGAQAAYEEEAALAGKTVKGPTVKRHVHPETGAQEREEETVERKAATLAGRQHPHPVAPVDKKPQEG</sequence>
<organism>
    <name type="scientific">Laccaria bicolor (strain S238N-H82 / ATCC MYA-4686)</name>
    <name type="common">Bicoloured deceiver</name>
    <name type="synonym">Laccaria laccata var. bicolor</name>
    <dbReference type="NCBI Taxonomy" id="486041"/>
    <lineage>
        <taxon>Eukaryota</taxon>
        <taxon>Fungi</taxon>
        <taxon>Dikarya</taxon>
        <taxon>Basidiomycota</taxon>
        <taxon>Agaricomycotina</taxon>
        <taxon>Agaricomycetes</taxon>
        <taxon>Agaricomycetidae</taxon>
        <taxon>Agaricales</taxon>
        <taxon>Agaricineae</taxon>
        <taxon>Hydnangiaceae</taxon>
        <taxon>Laccaria</taxon>
    </lineage>
</organism>
<protein>
    <recommendedName>
        <fullName>Respiratory supercomplex factor 1, mitochondrial</fullName>
    </recommendedName>
</protein>
<evidence type="ECO:0000250" key="1"/>
<evidence type="ECO:0000255" key="2"/>
<evidence type="ECO:0000255" key="3">
    <source>
        <dbReference type="PROSITE-ProRule" id="PRU00836"/>
    </source>
</evidence>
<evidence type="ECO:0000256" key="4">
    <source>
        <dbReference type="SAM" id="MobiDB-lite"/>
    </source>
</evidence>
<evidence type="ECO:0000305" key="5"/>
<proteinExistence type="inferred from homology"/>
<gene>
    <name type="primary">RCF1</name>
    <name type="synonym">AIM31</name>
    <name type="ORF">LACBIDRAFT_293603</name>
</gene>
<dbReference type="EMBL" id="DS547097">
    <property type="protein sequence ID" value="EDR10354.1"/>
    <property type="molecule type" value="Genomic_DNA"/>
</dbReference>
<dbReference type="RefSeq" id="XP_001878804.1">
    <property type="nucleotide sequence ID" value="XM_001878769.1"/>
</dbReference>
<dbReference type="SMR" id="B0D4J7"/>
<dbReference type="STRING" id="486041.B0D4J7"/>
<dbReference type="GeneID" id="6074383"/>
<dbReference type="KEGG" id="lbc:LACBIDRAFT_293603"/>
<dbReference type="HOGENOM" id="CLU_087356_0_1_1"/>
<dbReference type="InParanoid" id="B0D4J7"/>
<dbReference type="OrthoDB" id="6604018at2759"/>
<dbReference type="Proteomes" id="UP000001194">
    <property type="component" value="Unassembled WGS sequence"/>
</dbReference>
<dbReference type="GO" id="GO:0031966">
    <property type="term" value="C:mitochondrial membrane"/>
    <property type="evidence" value="ECO:0007669"/>
    <property type="project" value="UniProtKB-SubCell"/>
</dbReference>
<dbReference type="GO" id="GO:0097250">
    <property type="term" value="P:mitochondrial respirasome assembly"/>
    <property type="evidence" value="ECO:0007669"/>
    <property type="project" value="TreeGrafter"/>
</dbReference>
<dbReference type="Gene3D" id="6.10.140.1320">
    <property type="match status" value="1"/>
</dbReference>
<dbReference type="InterPro" id="IPR007667">
    <property type="entry name" value="Hypoxia_induced_domain"/>
</dbReference>
<dbReference type="InterPro" id="IPR050355">
    <property type="entry name" value="RCF1"/>
</dbReference>
<dbReference type="PANTHER" id="PTHR12297:SF3">
    <property type="entry name" value="HIG1 DOMAIN FAMILY MEMBER 1A"/>
    <property type="match status" value="1"/>
</dbReference>
<dbReference type="PANTHER" id="PTHR12297">
    <property type="entry name" value="HYPOXIA-INDUCBILE GENE 1 HIG1 -RELATED"/>
    <property type="match status" value="1"/>
</dbReference>
<dbReference type="Pfam" id="PF04588">
    <property type="entry name" value="HIG_1_N"/>
    <property type="match status" value="1"/>
</dbReference>
<dbReference type="PROSITE" id="PS51503">
    <property type="entry name" value="HIG1"/>
    <property type="match status" value="1"/>
</dbReference>
<reference key="1">
    <citation type="journal article" date="2008" name="Nature">
        <title>The genome of Laccaria bicolor provides insights into mycorrhizal symbiosis.</title>
        <authorList>
            <person name="Martin F."/>
            <person name="Aerts A."/>
            <person name="Ahren D."/>
            <person name="Brun A."/>
            <person name="Danchin E.G.J."/>
            <person name="Duchaussoy F."/>
            <person name="Gibon J."/>
            <person name="Kohler A."/>
            <person name="Lindquist E."/>
            <person name="Pereda V."/>
            <person name="Salamov A."/>
            <person name="Shapiro H.J."/>
            <person name="Wuyts J."/>
            <person name="Blaudez D."/>
            <person name="Buee M."/>
            <person name="Brokstein P."/>
            <person name="Canbaeck B."/>
            <person name="Cohen D."/>
            <person name="Courty P.E."/>
            <person name="Coutinho P.M."/>
            <person name="Delaruelle C."/>
            <person name="Detter J.C."/>
            <person name="Deveau A."/>
            <person name="DiFazio S."/>
            <person name="Duplessis S."/>
            <person name="Fraissinet-Tachet L."/>
            <person name="Lucic E."/>
            <person name="Frey-Klett P."/>
            <person name="Fourrey C."/>
            <person name="Feussner I."/>
            <person name="Gay G."/>
            <person name="Grimwood J."/>
            <person name="Hoegger P.J."/>
            <person name="Jain P."/>
            <person name="Kilaru S."/>
            <person name="Labbe J."/>
            <person name="Lin Y.C."/>
            <person name="Legue V."/>
            <person name="Le Tacon F."/>
            <person name="Marmeisse R."/>
            <person name="Melayah D."/>
            <person name="Montanini B."/>
            <person name="Muratet M."/>
            <person name="Nehls U."/>
            <person name="Niculita-Hirzel H."/>
            <person name="Oudot-Le Secq M.P."/>
            <person name="Peter M."/>
            <person name="Quesneville H."/>
            <person name="Rajashekar B."/>
            <person name="Reich M."/>
            <person name="Rouhier N."/>
            <person name="Schmutz J."/>
            <person name="Yin T."/>
            <person name="Chalot M."/>
            <person name="Henrissat B."/>
            <person name="Kuees U."/>
            <person name="Lucas S."/>
            <person name="Van de Peer Y."/>
            <person name="Podila G.K."/>
            <person name="Polle A."/>
            <person name="Pukkila P.J."/>
            <person name="Richardson P.M."/>
            <person name="Rouze P."/>
            <person name="Sanders I.R."/>
            <person name="Stajich J.E."/>
            <person name="Tunlid A."/>
            <person name="Tuskan G."/>
            <person name="Grigoriev I.V."/>
        </authorList>
    </citation>
    <scope>NUCLEOTIDE SEQUENCE [LARGE SCALE GENOMIC DNA]</scope>
    <source>
        <strain>S238N-H82 / ATCC MYA-4686</strain>
    </source>
</reference>
<accession>B0D4J7</accession>
<feature type="chain" id="PRO_0000399635" description="Respiratory supercomplex factor 1, mitochondrial">
    <location>
        <begin position="1"/>
        <end position="187"/>
    </location>
</feature>
<feature type="transmembrane region" description="Helical" evidence="3">
    <location>
        <begin position="38"/>
        <end position="55"/>
    </location>
</feature>
<feature type="transmembrane region" description="Helical" evidence="3">
    <location>
        <begin position="68"/>
        <end position="90"/>
    </location>
</feature>
<feature type="domain" description="HIG1" evidence="3">
    <location>
        <begin position="10"/>
        <end position="101"/>
    </location>
</feature>
<feature type="region of interest" description="Disordered" evidence="4">
    <location>
        <begin position="133"/>
        <end position="187"/>
    </location>
</feature>
<feature type="coiled-coil region" evidence="2">
    <location>
        <begin position="95"/>
        <end position="132"/>
    </location>
</feature>
<name>RCF1_LACBS</name>